<accession>Q6P0D0</accession>
<accession>O42476</accession>
<accession>Q6PHD0</accession>
<reference key="1">
    <citation type="journal article" date="1997" name="Mech. Dev.">
        <title>Cloning and expression of the quaking gene in the zebrafish embryo.</title>
        <authorList>
            <person name="Tanaka H."/>
            <person name="Abe K."/>
            <person name="Kim C.-H."/>
        </authorList>
    </citation>
    <scope>NUCLEOTIDE SEQUENCE [MRNA] (ISOFORMS 1 AND 2)</scope>
    <scope>DEVELOPMENTAL STAGE</scope>
</reference>
<reference key="2">
    <citation type="submission" date="2004-01" db="EMBL/GenBank/DDBJ databases">
        <authorList>
            <consortium name="NIH - Zebrafish Gene Collection (ZGC) project"/>
        </authorList>
    </citation>
    <scope>NUCLEOTIDE SEQUENCE [LARGE SCALE MRNA] (ISOFORMS 1 AND 2)</scope>
    <source>
        <tissue>Embryo</tissue>
    </source>
</reference>
<reference key="3">
    <citation type="journal article" date="2011" name="Development">
        <title>Fine-tuning of Hh signaling by the RNA-binding protein Quaking to control muscle development.</title>
        <authorList>
            <person name="Lobbardi R."/>
            <person name="Lambert G."/>
            <person name="Zhao J."/>
            <person name="Geisler R."/>
            <person name="Kim H.R."/>
            <person name="Rosa F.M."/>
        </authorList>
    </citation>
    <scope>FUNCTION</scope>
</reference>
<reference key="4">
    <citation type="journal article" date="2017" name="Dev. Cell">
        <title>Quaking RNA-binding proteins control early myofibril formation by modulating tropomyosin.</title>
        <authorList>
            <person name="Bonnet A."/>
            <person name="Lambert G."/>
            <person name="Ernest S."/>
            <person name="Dutrieux F.X."/>
            <person name="Coulpier F."/>
            <person name="Lemoine S."/>
            <person name="Lobbardi R."/>
            <person name="Rosa F.M."/>
        </authorList>
    </citation>
    <scope>FUNCTION</scope>
</reference>
<evidence type="ECO:0000250" key="1">
    <source>
        <dbReference type="UniProtKB" id="Q96PU8"/>
    </source>
</evidence>
<evidence type="ECO:0000250" key="2">
    <source>
        <dbReference type="UniProtKB" id="Q9QYS9"/>
    </source>
</evidence>
<evidence type="ECO:0000269" key="3">
    <source>
    </source>
</evidence>
<evidence type="ECO:0000269" key="4">
    <source>
    </source>
</evidence>
<evidence type="ECO:0000269" key="5">
    <source>
    </source>
</evidence>
<evidence type="ECO:0000303" key="6">
    <source>
    </source>
</evidence>
<evidence type="ECO:0000303" key="7">
    <source>
    </source>
</evidence>
<evidence type="ECO:0000303" key="8">
    <source ref="2"/>
</evidence>
<evidence type="ECO:0000305" key="9"/>
<feature type="chain" id="PRO_0000239378" description="Protein quaking-A">
    <location>
        <begin position="1"/>
        <end position="341"/>
    </location>
</feature>
<feature type="domain" description="KH">
    <location>
        <begin position="87"/>
        <end position="153"/>
    </location>
</feature>
<feature type="short sequence motif" description="SH3-binding">
    <location>
        <begin position="276"/>
        <end position="279"/>
    </location>
</feature>
<feature type="short sequence motif" description="Nuclear localization signal" evidence="2">
    <location>
        <begin position="324"/>
        <end position="330"/>
    </location>
</feature>
<feature type="splice variant" id="VSP_019204" description="In isoform 2." evidence="7 8">
    <original>L</original>
    <variation>LGKRAWGLGTSPFGVPQEGTPGVFYGGILDGASPSPVQDSLK</variation>
    <location>
        <position position="311"/>
    </location>
</feature>
<gene>
    <name evidence="6" type="primary">qkia</name>
    <name type="synonym">qk</name>
</gene>
<keyword id="KW-0025">Alternative splicing</keyword>
<keyword id="KW-0963">Cytoplasm</keyword>
<keyword id="KW-0217">Developmental protein</keyword>
<keyword id="KW-0221">Differentiation</keyword>
<keyword id="KW-0507">mRNA processing</keyword>
<keyword id="KW-0508">mRNA splicing</keyword>
<keyword id="KW-0509">mRNA transport</keyword>
<keyword id="KW-0539">Nucleus</keyword>
<keyword id="KW-1185">Reference proteome</keyword>
<keyword id="KW-0694">RNA-binding</keyword>
<keyword id="KW-0729">SH3-binding</keyword>
<keyword id="KW-0810">Translation regulation</keyword>
<keyword id="KW-0813">Transport</keyword>
<dbReference type="EMBL" id="U62134">
    <property type="protein sequence ID" value="AAB70454.1"/>
    <property type="status" value="ALT_INIT"/>
    <property type="molecule type" value="mRNA"/>
</dbReference>
<dbReference type="EMBL" id="BC056599">
    <property type="protein sequence ID" value="AAH56599.1"/>
    <property type="molecule type" value="mRNA"/>
</dbReference>
<dbReference type="EMBL" id="BC065667">
    <property type="protein sequence ID" value="AAH65667.1"/>
    <property type="molecule type" value="mRNA"/>
</dbReference>
<dbReference type="RefSeq" id="NP_571299.1">
    <property type="nucleotide sequence ID" value="NM_131224.1"/>
</dbReference>
<dbReference type="SMR" id="Q6P0D0"/>
<dbReference type="FunCoup" id="Q6P0D0">
    <property type="interactions" value="123"/>
</dbReference>
<dbReference type="STRING" id="7955.ENSDARP00000140694"/>
<dbReference type="GeneID" id="30471"/>
<dbReference type="KEGG" id="dre:30471"/>
<dbReference type="AGR" id="ZFIN:ZDB-GENE-990415-230"/>
<dbReference type="CTD" id="30471"/>
<dbReference type="ZFIN" id="ZDB-GENE-990415-230">
    <property type="gene designation" value="qkia"/>
</dbReference>
<dbReference type="InParanoid" id="Q6P0D0"/>
<dbReference type="OMA" id="TPIMNLI"/>
<dbReference type="OrthoDB" id="6777263at2759"/>
<dbReference type="ChiTaRS" id="qkia">
    <property type="organism name" value="zebrafish"/>
</dbReference>
<dbReference type="PRO" id="PR:Q6P0D0"/>
<dbReference type="Proteomes" id="UP000000437">
    <property type="component" value="Chromosome 17"/>
</dbReference>
<dbReference type="GO" id="GO:0005737">
    <property type="term" value="C:cytoplasm"/>
    <property type="evidence" value="ECO:0007669"/>
    <property type="project" value="UniProtKB-SubCell"/>
</dbReference>
<dbReference type="GO" id="GO:0005634">
    <property type="term" value="C:nucleus"/>
    <property type="evidence" value="ECO:0000318"/>
    <property type="project" value="GO_Central"/>
</dbReference>
<dbReference type="GO" id="GO:0003730">
    <property type="term" value="F:mRNA 3'-UTR binding"/>
    <property type="evidence" value="ECO:0000314"/>
    <property type="project" value="UniProtKB"/>
</dbReference>
<dbReference type="GO" id="GO:0003729">
    <property type="term" value="F:mRNA binding"/>
    <property type="evidence" value="ECO:0000318"/>
    <property type="project" value="GO_Central"/>
</dbReference>
<dbReference type="GO" id="GO:0017124">
    <property type="term" value="F:SH3 domain binding"/>
    <property type="evidence" value="ECO:0007669"/>
    <property type="project" value="UniProtKB-KW"/>
</dbReference>
<dbReference type="GO" id="GO:0070935">
    <property type="term" value="P:3'-UTR-mediated mRNA stabilization"/>
    <property type="evidence" value="ECO:0000316"/>
    <property type="project" value="ZFIN"/>
</dbReference>
<dbReference type="GO" id="GO:0051028">
    <property type="term" value="P:mRNA transport"/>
    <property type="evidence" value="ECO:0007669"/>
    <property type="project" value="UniProtKB-KW"/>
</dbReference>
<dbReference type="GO" id="GO:0045650">
    <property type="term" value="P:negative regulation of macrophage differentiation"/>
    <property type="evidence" value="ECO:0000250"/>
    <property type="project" value="UniProtKB"/>
</dbReference>
<dbReference type="GO" id="GO:0048710">
    <property type="term" value="P:regulation of astrocyte differentiation"/>
    <property type="evidence" value="ECO:0000250"/>
    <property type="project" value="UniProtKB"/>
</dbReference>
<dbReference type="GO" id="GO:0048024">
    <property type="term" value="P:regulation of mRNA splicing, via spliceosome"/>
    <property type="evidence" value="ECO:0000318"/>
    <property type="project" value="GO_Central"/>
</dbReference>
<dbReference type="GO" id="GO:0008589">
    <property type="term" value="P:regulation of smoothened signaling pathway"/>
    <property type="evidence" value="ECO:0000315"/>
    <property type="project" value="ZFIN"/>
</dbReference>
<dbReference type="GO" id="GO:0006417">
    <property type="term" value="P:regulation of translation"/>
    <property type="evidence" value="ECO:0007669"/>
    <property type="project" value="UniProtKB-KW"/>
</dbReference>
<dbReference type="GO" id="GO:0007519">
    <property type="term" value="P:skeletal muscle tissue development"/>
    <property type="evidence" value="ECO:0000315"/>
    <property type="project" value="ZFIN"/>
</dbReference>
<dbReference type="GO" id="GO:0014866">
    <property type="term" value="P:skeletal myofibril assembly"/>
    <property type="evidence" value="ECO:0000316"/>
    <property type="project" value="ZFIN"/>
</dbReference>
<dbReference type="GO" id="GO:0160091">
    <property type="term" value="P:spliceosome-depend formation of circular RNA"/>
    <property type="evidence" value="ECO:0000250"/>
    <property type="project" value="UniProtKB"/>
</dbReference>
<dbReference type="CDD" id="cd22465">
    <property type="entry name" value="KH-I_Hqk"/>
    <property type="match status" value="1"/>
</dbReference>
<dbReference type="FunFam" id="1.20.5.4010:FF:000001">
    <property type="entry name" value="protein quaking isoform X1"/>
    <property type="match status" value="1"/>
</dbReference>
<dbReference type="FunFam" id="3.30.1370.10:FF:000055">
    <property type="entry name" value="protein quaking isoform X1"/>
    <property type="match status" value="1"/>
</dbReference>
<dbReference type="Gene3D" id="1.20.5.4010">
    <property type="match status" value="1"/>
</dbReference>
<dbReference type="Gene3D" id="3.30.1370.10">
    <property type="entry name" value="K Homology domain, type 1"/>
    <property type="match status" value="1"/>
</dbReference>
<dbReference type="InterPro" id="IPR045071">
    <property type="entry name" value="BBP-like"/>
</dbReference>
<dbReference type="InterPro" id="IPR055256">
    <property type="entry name" value="KH_1_KHDC4/BBP-like"/>
</dbReference>
<dbReference type="InterPro" id="IPR004087">
    <property type="entry name" value="KH_dom"/>
</dbReference>
<dbReference type="InterPro" id="IPR036612">
    <property type="entry name" value="KH_dom_type_1_sf"/>
</dbReference>
<dbReference type="InterPro" id="IPR032367">
    <property type="entry name" value="Quaking_NLS"/>
</dbReference>
<dbReference type="InterPro" id="IPR032377">
    <property type="entry name" value="STAR_dimer"/>
</dbReference>
<dbReference type="PANTHER" id="PTHR11208:SF131">
    <property type="entry name" value="PROTEIN QUAKING-A"/>
    <property type="match status" value="1"/>
</dbReference>
<dbReference type="PANTHER" id="PTHR11208">
    <property type="entry name" value="RNA-BINDING PROTEIN RELATED"/>
    <property type="match status" value="1"/>
</dbReference>
<dbReference type="Pfam" id="PF22675">
    <property type="entry name" value="KH-I_KHDC4-BBP"/>
    <property type="match status" value="1"/>
</dbReference>
<dbReference type="Pfam" id="PF16551">
    <property type="entry name" value="Quaking_NLS"/>
    <property type="match status" value="1"/>
</dbReference>
<dbReference type="Pfam" id="PF16544">
    <property type="entry name" value="STAR_dimer"/>
    <property type="match status" value="1"/>
</dbReference>
<dbReference type="SMART" id="SM00322">
    <property type="entry name" value="KH"/>
    <property type="match status" value="1"/>
</dbReference>
<dbReference type="SUPFAM" id="SSF54791">
    <property type="entry name" value="Eukaryotic type KH-domain (KH-domain type I)"/>
    <property type="match status" value="1"/>
</dbReference>
<protein>
    <recommendedName>
        <fullName>Protein quaking-A</fullName>
        <shortName evidence="7">zqk</shortName>
    </recommendedName>
</protein>
<proteinExistence type="evidence at transcript level"/>
<comment type="function">
    <text evidence="1 2 3 4">RNA reader protein, which recognizes and binds specific RNAs, thereby regulating RNA metabolic processes, such as pre-mRNA splicing, circular RNA (circRNA) formation, mRNA export, mRNA stability and/or translation (PubMed:21447554, PubMed:28867488). Involved in various cellular processes, such as mRNA storage into stress granules, apoptosis, interferon response, glial cell fate and development (By similarity). Binds to the 5'-NACUAAY-N(1,20)-UAAY-3' RNA core sequence (By similarity). Acts as a mRNA modification reader that specifically recognizes and binds mRNA transcripts modified by internal N(7)-methylguanine (m7G) (By similarity). Promotes the formation of circular RNAs (circRNAs): acts by binding to sites flanking circRNA-forming exons (By similarity). CircRNAs are produced by back-splicing circularization of pre-mRNAs (By similarity). Required to protect and promote stability of mRNAs which promotes oligodendrocyte differentiation (By similarity). Acts as an important regulator of muscle development: required during early skeletal myofibril formation by regulating the accumulation of the muscle-specific tropomyosin-3 (tpm3) transcripts (PubMed:28867488).</text>
</comment>
<comment type="subunit">
    <text evidence="2">Homodimer; does not require RNA to homodimerize.</text>
</comment>
<comment type="subcellular location">
    <subcellularLocation>
        <location evidence="2">Cytoplasm</location>
    </subcellularLocation>
    <subcellularLocation>
        <location evidence="2">Nucleus</location>
    </subcellularLocation>
</comment>
<comment type="alternative products">
    <event type="alternative splicing"/>
    <isoform>
        <id>Q6P0D0-1</id>
        <name>1</name>
        <sequence type="displayed"/>
    </isoform>
    <isoform>
        <id>Q6P0D0-2</id>
        <name>2</name>
        <name>ZD</name>
        <sequence type="described" ref="VSP_019204"/>
    </isoform>
</comment>
<comment type="developmental stage">
    <text evidence="5">Maternally and zygotically expressed (PubMed:9486543). Ubiquitously expressed during cleavage and blastula periods, and then it accumulates in the dorsal midline of the body trunk during gastrulation (PubMed:9486543). During segmentation and pharyngula periods it is expressed in the neural tissue of the head region, and in the paraxial mesoderm of the body trunk (PubMed:9486543). Subsequently expression diminishes until the hatching period, when it is expressed only in the cardiac sac and pectoral finbuds (PubMed:9486543).</text>
</comment>
<comment type="developmental stage">
    <molecule>Isoform 2</molecule>
    <text evidence="5">Localizes in neural tissue in the head region, but not in the paraxial mesoderm in the body trunk.</text>
</comment>
<comment type="similarity">
    <text evidence="9">Belongs to the quaking family.</text>
</comment>
<comment type="sequence caution" evidence="9">
    <conflict type="erroneous initiation">
        <sequence resource="EMBL-CDS" id="AAB70454"/>
    </conflict>
</comment>
<sequence length="341" mass="37934">MVGEMEVKERPRPSPDYLMQLLNEKKLMTSLPNLCGIFTHLERLLDEEINRVRKDMYNDSVNGLVDKHPLELPEPVGPIVHLQEKLFVPVKEYPDYNFVGRILGPRGLTAKQLEAETGCKIMVRGRSSMRDKKKEEQNRGKPNWEHLNEDLHVLITVEDTQTRAEIKMRRAVEEVKKLLVPAAEGEDNLKKMQLMELAILNGTYRDTNIKAPTLAFSLAAAAAAAQGPRLIAAPPGQVLPPATLRPPTPAGTPIMNIIRPTQMATVLPNGTPTLVPPTPDAGIIYTTPYDYPYALAPTSLLEYPIEHSGVLGAMATKVRRHDSRVHPYQRIVTADRAATGN</sequence>
<organism>
    <name type="scientific">Danio rerio</name>
    <name type="common">Zebrafish</name>
    <name type="synonym">Brachydanio rerio</name>
    <dbReference type="NCBI Taxonomy" id="7955"/>
    <lineage>
        <taxon>Eukaryota</taxon>
        <taxon>Metazoa</taxon>
        <taxon>Chordata</taxon>
        <taxon>Craniata</taxon>
        <taxon>Vertebrata</taxon>
        <taxon>Euteleostomi</taxon>
        <taxon>Actinopterygii</taxon>
        <taxon>Neopterygii</taxon>
        <taxon>Teleostei</taxon>
        <taxon>Ostariophysi</taxon>
        <taxon>Cypriniformes</taxon>
        <taxon>Danionidae</taxon>
        <taxon>Danioninae</taxon>
        <taxon>Danio</taxon>
    </lineage>
</organism>
<name>QKIA_DANRE</name>